<protein>
    <recommendedName>
        <fullName>Putative uncharacterized protein ycf15</fullName>
    </recommendedName>
</protein>
<gene>
    <name type="primary">ycf15-A</name>
</gene>
<gene>
    <name type="primary">ycf15-B</name>
</gene>
<dbReference type="EMBL" id="DQ347958">
    <property type="protein sequence ID" value="ABC56257.1"/>
    <property type="molecule type" value="Genomic_DNA"/>
</dbReference>
<dbReference type="EMBL" id="DQ347958">
    <property type="protein sequence ID" value="ABC56276.1"/>
    <property type="molecule type" value="Genomic_DNA"/>
</dbReference>
<dbReference type="GO" id="GO:0009507">
    <property type="term" value="C:chloroplast"/>
    <property type="evidence" value="ECO:0007669"/>
    <property type="project" value="UniProtKB-SubCell"/>
</dbReference>
<dbReference type="InterPro" id="IPR019645">
    <property type="entry name" value="Uncharacterised_Ycf15"/>
</dbReference>
<dbReference type="Pfam" id="PF10705">
    <property type="entry name" value="Ycf15"/>
    <property type="match status" value="1"/>
</dbReference>
<organism>
    <name type="scientific">Solanum bulbocastanum</name>
    <name type="common">Wild potato</name>
    <dbReference type="NCBI Taxonomy" id="147425"/>
    <lineage>
        <taxon>Eukaryota</taxon>
        <taxon>Viridiplantae</taxon>
        <taxon>Streptophyta</taxon>
        <taxon>Embryophyta</taxon>
        <taxon>Tracheophyta</taxon>
        <taxon>Spermatophyta</taxon>
        <taxon>Magnoliopsida</taxon>
        <taxon>eudicotyledons</taxon>
        <taxon>Gunneridae</taxon>
        <taxon>Pentapetalae</taxon>
        <taxon>asterids</taxon>
        <taxon>lamiids</taxon>
        <taxon>Solanales</taxon>
        <taxon>Solanaceae</taxon>
        <taxon>Solanoideae</taxon>
        <taxon>Solaneae</taxon>
        <taxon>Solanum</taxon>
    </lineage>
</organism>
<feature type="chain" id="PRO_0000299591" description="Putative uncharacterized protein ycf15">
    <location>
        <begin position="1"/>
        <end position="87"/>
    </location>
</feature>
<accession>Q2MIE3</accession>
<proteinExistence type="uncertain"/>
<geneLocation type="chloroplast"/>
<name>YCF15_SOLBU</name>
<comment type="subcellular location">
    <subcellularLocation>
        <location>Plastid</location>
        <location>Chloroplast</location>
    </subcellularLocation>
</comment>
<comment type="similarity">
    <text evidence="1">Belongs to the ycf15 family.</text>
</comment>
<comment type="caution">
    <text evidence="1">Could be the product of a pseudogene.</text>
</comment>
<sequence length="87" mass="10545">METLVSSIFWTLAPWKNMLLLKHGRIEILDQNTMYGWYELPKQEFLNSKQPVQIFTTKKYWILFRIGPERRRKAGMPTGVYYIEFTR</sequence>
<keyword id="KW-0150">Chloroplast</keyword>
<keyword id="KW-0934">Plastid</keyword>
<reference key="1">
    <citation type="journal article" date="2006" name="Theor. Appl. Genet.">
        <title>Complete chloroplast genome sequences of Solanum bulbocastanum, Solanum lycopersicum and comparative analyses with other Solanaceae genomes.</title>
        <authorList>
            <person name="Daniell H."/>
            <person name="Lee S.-B."/>
            <person name="Grevich J."/>
            <person name="Saski C."/>
            <person name="Quesada-Vargas T."/>
            <person name="Guda C."/>
            <person name="Tomkins J."/>
            <person name="Jansen R.K."/>
        </authorList>
    </citation>
    <scope>NUCLEOTIDE SEQUENCE [LARGE SCALE GENOMIC DNA]</scope>
    <source>
        <strain>cv. PT29</strain>
    </source>
</reference>
<evidence type="ECO:0000305" key="1"/>